<gene>
    <name type="primary">Ccn3</name>
    <name evidence="15" type="synonym">Nov</name>
</gene>
<name>CCN3_RAT</name>
<dbReference type="EMBL" id="AF171936">
    <property type="protein sequence ID" value="AAD49371.1"/>
    <property type="molecule type" value="mRNA"/>
</dbReference>
<dbReference type="EMBL" id="BC072548">
    <property type="protein sequence ID" value="AAH72548.1"/>
    <property type="molecule type" value="mRNA"/>
</dbReference>
<dbReference type="RefSeq" id="NP_110495.1">
    <property type="nucleotide sequence ID" value="NM_030868.2"/>
</dbReference>
<dbReference type="PDB" id="5NB8">
    <property type="method" value="X-ray"/>
    <property type="resolution" value="2.10 A"/>
    <property type="chains" value="A/B/C/D=100-195"/>
</dbReference>
<dbReference type="PDB" id="6RK1">
    <property type="method" value="X-ray"/>
    <property type="resolution" value="1.63 A"/>
    <property type="chains" value="A/B=195-249"/>
</dbReference>
<dbReference type="PDBsum" id="5NB8"/>
<dbReference type="PDBsum" id="6RK1"/>
<dbReference type="SMR" id="Q9QZQ5"/>
<dbReference type="FunCoup" id="Q9QZQ5">
    <property type="interactions" value="458"/>
</dbReference>
<dbReference type="STRING" id="10116.ENSRNOP00000011904"/>
<dbReference type="GlyCosmos" id="Q9QZQ5">
    <property type="glycosylation" value="2 sites, No reported glycans"/>
</dbReference>
<dbReference type="GlyGen" id="Q9QZQ5">
    <property type="glycosylation" value="3 sites"/>
</dbReference>
<dbReference type="PhosphoSitePlus" id="Q9QZQ5"/>
<dbReference type="PaxDb" id="10116-ENSRNOP00000011904"/>
<dbReference type="Ensembl" id="ENSRNOT00000011904.6">
    <property type="protein sequence ID" value="ENSRNOP00000011904.3"/>
    <property type="gene ID" value="ENSRNOG00000008697.6"/>
</dbReference>
<dbReference type="GeneID" id="81526"/>
<dbReference type="KEGG" id="rno:81526"/>
<dbReference type="UCSC" id="RGD:621553">
    <property type="organism name" value="rat"/>
</dbReference>
<dbReference type="AGR" id="RGD:621553"/>
<dbReference type="CTD" id="4856"/>
<dbReference type="RGD" id="621553">
    <property type="gene designation" value="Ccn3"/>
</dbReference>
<dbReference type="eggNOG" id="ENOG502QR9V">
    <property type="taxonomic scope" value="Eukaryota"/>
</dbReference>
<dbReference type="GeneTree" id="ENSGT00940000159963"/>
<dbReference type="HOGENOM" id="CLU_063247_1_0_1"/>
<dbReference type="InParanoid" id="Q9QZQ5"/>
<dbReference type="OMA" id="PRCNHDL"/>
<dbReference type="OrthoDB" id="365605at2759"/>
<dbReference type="PhylomeDB" id="Q9QZQ5"/>
<dbReference type="TreeFam" id="TF326070"/>
<dbReference type="PRO" id="PR:Q9QZQ5"/>
<dbReference type="Proteomes" id="UP000002494">
    <property type="component" value="Chromosome 7"/>
</dbReference>
<dbReference type="Bgee" id="ENSRNOG00000008697">
    <property type="expression patterns" value="Expressed in Ammon's horn and 20 other cell types or tissues"/>
</dbReference>
<dbReference type="GO" id="GO:0030424">
    <property type="term" value="C:axon"/>
    <property type="evidence" value="ECO:0000314"/>
    <property type="project" value="RGD"/>
</dbReference>
<dbReference type="GO" id="GO:0005737">
    <property type="term" value="C:cytoplasm"/>
    <property type="evidence" value="ECO:0000314"/>
    <property type="project" value="UniProtKB"/>
</dbReference>
<dbReference type="GO" id="GO:0030425">
    <property type="term" value="C:dendrite"/>
    <property type="evidence" value="ECO:0000314"/>
    <property type="project" value="RGD"/>
</dbReference>
<dbReference type="GO" id="GO:0031012">
    <property type="term" value="C:extracellular matrix"/>
    <property type="evidence" value="ECO:0000318"/>
    <property type="project" value="GO_Central"/>
</dbReference>
<dbReference type="GO" id="GO:0005576">
    <property type="term" value="C:extracellular region"/>
    <property type="evidence" value="ECO:0000314"/>
    <property type="project" value="UniProtKB"/>
</dbReference>
<dbReference type="GO" id="GO:0005615">
    <property type="term" value="C:extracellular space"/>
    <property type="evidence" value="ECO:0000318"/>
    <property type="project" value="GO_Central"/>
</dbReference>
<dbReference type="GO" id="GO:0005921">
    <property type="term" value="C:gap junction"/>
    <property type="evidence" value="ECO:0000314"/>
    <property type="project" value="UniProtKB"/>
</dbReference>
<dbReference type="GO" id="GO:0043025">
    <property type="term" value="C:neuronal cell body"/>
    <property type="evidence" value="ECO:0000314"/>
    <property type="project" value="RGD"/>
</dbReference>
<dbReference type="GO" id="GO:0008083">
    <property type="term" value="F:growth factor activity"/>
    <property type="evidence" value="ECO:0000304"/>
    <property type="project" value="RGD"/>
</dbReference>
<dbReference type="GO" id="GO:0008201">
    <property type="term" value="F:heparin binding"/>
    <property type="evidence" value="ECO:0000318"/>
    <property type="project" value="GO_Central"/>
</dbReference>
<dbReference type="GO" id="GO:0005179">
    <property type="term" value="F:hormone activity"/>
    <property type="evidence" value="ECO:0000250"/>
    <property type="project" value="UniProtKB"/>
</dbReference>
<dbReference type="GO" id="GO:0005178">
    <property type="term" value="F:integrin binding"/>
    <property type="evidence" value="ECO:0000266"/>
    <property type="project" value="RGD"/>
</dbReference>
<dbReference type="GO" id="GO:0005112">
    <property type="term" value="F:Notch binding"/>
    <property type="evidence" value="ECO:0000266"/>
    <property type="project" value="RGD"/>
</dbReference>
<dbReference type="GO" id="GO:0001525">
    <property type="term" value="P:angiogenesis"/>
    <property type="evidence" value="ECO:0000250"/>
    <property type="project" value="UniProtKB"/>
</dbReference>
<dbReference type="GO" id="GO:1990523">
    <property type="term" value="P:bone regeneration"/>
    <property type="evidence" value="ECO:0000250"/>
    <property type="project" value="UniProtKB"/>
</dbReference>
<dbReference type="GO" id="GO:0007155">
    <property type="term" value="P:cell adhesion"/>
    <property type="evidence" value="ECO:0000318"/>
    <property type="project" value="GO_Central"/>
</dbReference>
<dbReference type="GO" id="GO:0033627">
    <property type="term" value="P:cell adhesion mediated by integrin"/>
    <property type="evidence" value="ECO:0000250"/>
    <property type="project" value="UniProtKB"/>
</dbReference>
<dbReference type="GO" id="GO:0060326">
    <property type="term" value="P:cell chemotaxis"/>
    <property type="evidence" value="ECO:0000250"/>
    <property type="project" value="UniProtKB"/>
</dbReference>
<dbReference type="GO" id="GO:0002062">
    <property type="term" value="P:chondrocyte differentiation"/>
    <property type="evidence" value="ECO:0000315"/>
    <property type="project" value="UniProtKB"/>
</dbReference>
<dbReference type="GO" id="GO:0035767">
    <property type="term" value="P:endothelial cell chemotaxis"/>
    <property type="evidence" value="ECO:0000250"/>
    <property type="project" value="UniProtKB"/>
</dbReference>
<dbReference type="GO" id="GO:0071603">
    <property type="term" value="P:endothelial cell-cell adhesion"/>
    <property type="evidence" value="ECO:0000250"/>
    <property type="project" value="UniProtKB"/>
</dbReference>
<dbReference type="GO" id="GO:0010761">
    <property type="term" value="P:fibroblast migration"/>
    <property type="evidence" value="ECO:0000250"/>
    <property type="project" value="UniProtKB"/>
</dbReference>
<dbReference type="GO" id="GO:0061484">
    <property type="term" value="P:hematopoietic stem cell homeostasis"/>
    <property type="evidence" value="ECO:0000266"/>
    <property type="project" value="RGD"/>
</dbReference>
<dbReference type="GO" id="GO:0030308">
    <property type="term" value="P:negative regulation of cell growth"/>
    <property type="evidence" value="ECO:0000250"/>
    <property type="project" value="UniProtKB"/>
</dbReference>
<dbReference type="GO" id="GO:1902731">
    <property type="term" value="P:negative regulation of chondrocyte proliferation"/>
    <property type="evidence" value="ECO:0000250"/>
    <property type="project" value="UniProtKB"/>
</dbReference>
<dbReference type="GO" id="GO:0050728">
    <property type="term" value="P:negative regulation of inflammatory response"/>
    <property type="evidence" value="ECO:0000250"/>
    <property type="project" value="UniProtKB"/>
</dbReference>
<dbReference type="GO" id="GO:0046676">
    <property type="term" value="P:negative regulation of insulin secretion"/>
    <property type="evidence" value="ECO:0000250"/>
    <property type="project" value="UniProtKB"/>
</dbReference>
<dbReference type="GO" id="GO:0090027">
    <property type="term" value="P:negative regulation of monocyte chemotaxis"/>
    <property type="evidence" value="ECO:0000250"/>
    <property type="project" value="UniProtKB"/>
</dbReference>
<dbReference type="GO" id="GO:0010832">
    <property type="term" value="P:negative regulation of myotube differentiation"/>
    <property type="evidence" value="ECO:0000250"/>
    <property type="project" value="UniProtKB"/>
</dbReference>
<dbReference type="GO" id="GO:1901223">
    <property type="term" value="P:negative regulation of non-canonical NF-kappaB signal transduction"/>
    <property type="evidence" value="ECO:0000250"/>
    <property type="project" value="UniProtKB"/>
</dbReference>
<dbReference type="GO" id="GO:1904057">
    <property type="term" value="P:negative regulation of sensory perception of pain"/>
    <property type="evidence" value="ECO:0000315"/>
    <property type="project" value="UniProtKB"/>
</dbReference>
<dbReference type="GO" id="GO:0060392">
    <property type="term" value="P:negative regulation of SMAD protein signal transduction"/>
    <property type="evidence" value="ECO:0000250"/>
    <property type="project" value="UniProtKB"/>
</dbReference>
<dbReference type="GO" id="GO:0045597">
    <property type="term" value="P:positive regulation of cell differentiation"/>
    <property type="evidence" value="ECO:0000318"/>
    <property type="project" value="GO_Central"/>
</dbReference>
<dbReference type="GO" id="GO:0045747">
    <property type="term" value="P:positive regulation of Notch signaling pathway"/>
    <property type="evidence" value="ECO:0000250"/>
    <property type="project" value="UniProtKB"/>
</dbReference>
<dbReference type="GO" id="GO:0045778">
    <property type="term" value="P:positive regulation of ossification"/>
    <property type="evidence" value="ECO:0000250"/>
    <property type="project" value="UniProtKB"/>
</dbReference>
<dbReference type="GO" id="GO:0010468">
    <property type="term" value="P:regulation of gene expression"/>
    <property type="evidence" value="ECO:0000314"/>
    <property type="project" value="MGI"/>
</dbReference>
<dbReference type="GO" id="GO:0007165">
    <property type="term" value="P:signal transduction"/>
    <property type="evidence" value="ECO:0000318"/>
    <property type="project" value="GO_Central"/>
</dbReference>
<dbReference type="GO" id="GO:0014909">
    <property type="term" value="P:smooth muscle cell migration"/>
    <property type="evidence" value="ECO:0000250"/>
    <property type="project" value="UniProtKB"/>
</dbReference>
<dbReference type="GO" id="GO:0048659">
    <property type="term" value="P:smooth muscle cell proliferation"/>
    <property type="evidence" value="ECO:0000250"/>
    <property type="project" value="UniProtKB"/>
</dbReference>
<dbReference type="GO" id="GO:0044342">
    <property type="term" value="P:type B pancreatic cell proliferation"/>
    <property type="evidence" value="ECO:0000250"/>
    <property type="project" value="UniProtKB"/>
</dbReference>
<dbReference type="FunFam" id="2.20.100.10:FF:000046">
    <property type="entry name" value="Cellular communication network factor 4"/>
    <property type="match status" value="1"/>
</dbReference>
<dbReference type="Gene3D" id="2.10.70.10">
    <property type="entry name" value="Complement Module, domain 1"/>
    <property type="match status" value="1"/>
</dbReference>
<dbReference type="Gene3D" id="2.20.100.10">
    <property type="entry name" value="Thrombospondin type-1 (TSP1) repeat"/>
    <property type="match status" value="1"/>
</dbReference>
<dbReference type="InterPro" id="IPR050941">
    <property type="entry name" value="CCN"/>
</dbReference>
<dbReference type="InterPro" id="IPR006207">
    <property type="entry name" value="Cys_knot_C"/>
</dbReference>
<dbReference type="InterPro" id="IPR006208">
    <property type="entry name" value="Glyco_hormone_CN"/>
</dbReference>
<dbReference type="InterPro" id="IPR009030">
    <property type="entry name" value="Growth_fac_rcpt_cys_sf"/>
</dbReference>
<dbReference type="InterPro" id="IPR000867">
    <property type="entry name" value="IGFBP-like"/>
</dbReference>
<dbReference type="InterPro" id="IPR012395">
    <property type="entry name" value="IGFBP_CNN"/>
</dbReference>
<dbReference type="InterPro" id="IPR017891">
    <property type="entry name" value="Insulin_GF-bd_Cys-rich_CS"/>
</dbReference>
<dbReference type="InterPro" id="IPR043973">
    <property type="entry name" value="TSP1_CCN"/>
</dbReference>
<dbReference type="InterPro" id="IPR000884">
    <property type="entry name" value="TSP1_rpt"/>
</dbReference>
<dbReference type="InterPro" id="IPR036383">
    <property type="entry name" value="TSP1_rpt_sf"/>
</dbReference>
<dbReference type="InterPro" id="IPR001007">
    <property type="entry name" value="VWF_dom"/>
</dbReference>
<dbReference type="PANTHER" id="PTHR11348:SF8">
    <property type="entry name" value="CCN FAMILY MEMBER 3"/>
    <property type="match status" value="1"/>
</dbReference>
<dbReference type="PANTHER" id="PTHR11348">
    <property type="entry name" value="CONNECTIVE TISSUE GROWTH FACTOR-RELATED"/>
    <property type="match status" value="1"/>
</dbReference>
<dbReference type="Pfam" id="PF00007">
    <property type="entry name" value="Cys_knot"/>
    <property type="match status" value="1"/>
</dbReference>
<dbReference type="Pfam" id="PF00219">
    <property type="entry name" value="IGFBP"/>
    <property type="match status" value="1"/>
</dbReference>
<dbReference type="Pfam" id="PF19035">
    <property type="entry name" value="TSP1_CCN"/>
    <property type="match status" value="1"/>
</dbReference>
<dbReference type="Pfam" id="PF00093">
    <property type="entry name" value="VWC"/>
    <property type="match status" value="1"/>
</dbReference>
<dbReference type="PIRSF" id="PIRSF036495">
    <property type="entry name" value="IGFBP_rP_CNN"/>
    <property type="match status" value="1"/>
</dbReference>
<dbReference type="SMART" id="SM00041">
    <property type="entry name" value="CT"/>
    <property type="match status" value="1"/>
</dbReference>
<dbReference type="SMART" id="SM00121">
    <property type="entry name" value="IB"/>
    <property type="match status" value="1"/>
</dbReference>
<dbReference type="SMART" id="SM00209">
    <property type="entry name" value="TSP1"/>
    <property type="match status" value="1"/>
</dbReference>
<dbReference type="SMART" id="SM00214">
    <property type="entry name" value="VWC"/>
    <property type="match status" value="1"/>
</dbReference>
<dbReference type="SUPFAM" id="SSF57603">
    <property type="entry name" value="FnI-like domain"/>
    <property type="match status" value="1"/>
</dbReference>
<dbReference type="SUPFAM" id="SSF57184">
    <property type="entry name" value="Growth factor receptor domain"/>
    <property type="match status" value="1"/>
</dbReference>
<dbReference type="SUPFAM" id="SSF82895">
    <property type="entry name" value="TSP-1 type 1 repeat"/>
    <property type="match status" value="1"/>
</dbReference>
<dbReference type="PROSITE" id="PS01185">
    <property type="entry name" value="CTCK_1"/>
    <property type="match status" value="1"/>
</dbReference>
<dbReference type="PROSITE" id="PS01225">
    <property type="entry name" value="CTCK_2"/>
    <property type="match status" value="1"/>
</dbReference>
<dbReference type="PROSITE" id="PS00222">
    <property type="entry name" value="IGFBP_N_1"/>
    <property type="match status" value="1"/>
</dbReference>
<dbReference type="PROSITE" id="PS51323">
    <property type="entry name" value="IGFBP_N_2"/>
    <property type="match status" value="1"/>
</dbReference>
<dbReference type="PROSITE" id="PS50092">
    <property type="entry name" value="TSP1"/>
    <property type="match status" value="1"/>
</dbReference>
<dbReference type="PROSITE" id="PS01208">
    <property type="entry name" value="VWFC_1"/>
    <property type="match status" value="1"/>
</dbReference>
<dbReference type="PROSITE" id="PS50184">
    <property type="entry name" value="VWFC_2"/>
    <property type="match status" value="1"/>
</dbReference>
<sequence>MSVFLRKQCLCLGFLLLHLLNQVSATLRCPSRCPSQCPSISPTCAPGVRSVLDGCSCCPVCARQRGESCSEMRPCDQSSGLYCDRSADPNNETGICMVPEGDNCVFDGVIYRNGEKFEPNCQYHCTCRDGQIGCVPRCQLDVLLPGPDCPAPKKVAVPGECCEKWTCGSEEKGTLGGLALPAYRPEATVGVELSDSSINCIEQTTEWSACSKSCGMGLSTRVTNRNLQCEMVKQTRLCMVRPCEQEPGEATDMKGKKCLRTKKSLKSIHLQFKNCTSLYTYKPRFCGICSDGRCCTPFNTKTIQVEFQCLPGQIIKKPVMVIGTCTCHSNCPQNNEAFLQELELKTSRGEM</sequence>
<proteinExistence type="evidence at protein level"/>
<evidence type="ECO:0000250" key="1"/>
<evidence type="ECO:0000250" key="2">
    <source>
        <dbReference type="UniProtKB" id="P48745"/>
    </source>
</evidence>
<evidence type="ECO:0000250" key="3">
    <source>
        <dbReference type="UniProtKB" id="Q64299"/>
    </source>
</evidence>
<evidence type="ECO:0000255" key="4"/>
<evidence type="ECO:0000255" key="5">
    <source>
        <dbReference type="PROSITE-ProRule" id="PRU00039"/>
    </source>
</evidence>
<evidence type="ECO:0000255" key="6">
    <source>
        <dbReference type="PROSITE-ProRule" id="PRU00210"/>
    </source>
</evidence>
<evidence type="ECO:0000255" key="7">
    <source>
        <dbReference type="PROSITE-ProRule" id="PRU00220"/>
    </source>
</evidence>
<evidence type="ECO:0000255" key="8">
    <source>
        <dbReference type="PROSITE-ProRule" id="PRU00653"/>
    </source>
</evidence>
<evidence type="ECO:0000269" key="9">
    <source>
    </source>
</evidence>
<evidence type="ECO:0000269" key="10">
    <source>
    </source>
</evidence>
<evidence type="ECO:0000269" key="11">
    <source>
    </source>
</evidence>
<evidence type="ECO:0000269" key="12">
    <source>
    </source>
</evidence>
<evidence type="ECO:0000269" key="13">
    <source>
    </source>
</evidence>
<evidence type="ECO:0000305" key="14"/>
<evidence type="ECO:0000312" key="15">
    <source>
        <dbReference type="RGD" id="621553"/>
    </source>
</evidence>
<evidence type="ECO:0007829" key="16">
    <source>
        <dbReference type="PDB" id="5NB8"/>
    </source>
</evidence>
<evidence type="ECO:0007829" key="17">
    <source>
        <dbReference type="PDB" id="6RK1"/>
    </source>
</evidence>
<organism>
    <name type="scientific">Rattus norvegicus</name>
    <name type="common">Rat</name>
    <dbReference type="NCBI Taxonomy" id="10116"/>
    <lineage>
        <taxon>Eukaryota</taxon>
        <taxon>Metazoa</taxon>
        <taxon>Chordata</taxon>
        <taxon>Craniata</taxon>
        <taxon>Vertebrata</taxon>
        <taxon>Euteleostomi</taxon>
        <taxon>Mammalia</taxon>
        <taxon>Eutheria</taxon>
        <taxon>Euarchontoglires</taxon>
        <taxon>Glires</taxon>
        <taxon>Rodentia</taxon>
        <taxon>Myomorpha</taxon>
        <taxon>Muroidea</taxon>
        <taxon>Muridae</taxon>
        <taxon>Murinae</taxon>
        <taxon>Rattus</taxon>
    </lineage>
</organism>
<reference key="1">
    <citation type="journal article" date="1999" name="Gene">
        <title>Nephroblastoma overexpressed gene (NOV) codes for a growth factor that induces protein tyrosine phosphorylation.</title>
        <authorList>
            <person name="Liu C."/>
            <person name="Liu X.J."/>
            <person name="Crowe P.D."/>
            <person name="Kelner G.S."/>
            <person name="Fan J."/>
            <person name="Barry G."/>
            <person name="Manu F."/>
            <person name="Ling N."/>
            <person name="De Souza E.B."/>
            <person name="Maki R.A."/>
        </authorList>
    </citation>
    <scope>NUCLEOTIDE SEQUENCE [MRNA]</scope>
    <scope>CHARACTERIZATION</scope>
    <scope>TISSUE SPECIFICITY</scope>
    <source>
        <strain>Sprague-Dawley</strain>
    </source>
</reference>
<reference key="2">
    <citation type="journal article" date="2004" name="Genome Res.">
        <title>The status, quality, and expansion of the NIH full-length cDNA project: the Mammalian Gene Collection (MGC).</title>
        <authorList>
            <consortium name="The MGC Project Team"/>
        </authorList>
    </citation>
    <scope>NUCLEOTIDE SEQUENCE [LARGE SCALE MRNA]</scope>
    <source>
        <tissue>Heart</tissue>
    </source>
</reference>
<reference key="3">
    <citation type="journal article" date="2004" name="J. Biol. Chem.">
        <title>Connexin43 interacts with NOV: a possible mechanism for negative regulation of cell growth in choriocarcinoma cells.</title>
        <authorList>
            <person name="Gellhaus A."/>
            <person name="Dong X."/>
            <person name="Propson S."/>
            <person name="Maass K."/>
            <person name="Klein-Hitpass L."/>
            <person name="Kibschull M."/>
            <person name="Traub O."/>
            <person name="Willecke K."/>
            <person name="Perbal B."/>
            <person name="Lye S.J."/>
            <person name="Winterhager E."/>
        </authorList>
    </citation>
    <scope>INTERACTION WITH GJA1</scope>
</reference>
<reference key="4">
    <citation type="journal article" date="2004" name="J. Biol. Chem.">
        <title>CCN3 (NOV) interacts with connexin43 in C6 glioma cells: possible mechanism of connexin-mediated growth suppression.</title>
        <authorList>
            <person name="Fu C.T."/>
            <person name="Bechberger J.F."/>
            <person name="Ozog M.A."/>
            <person name="Perbal B."/>
            <person name="Naus C.C."/>
        </authorList>
    </citation>
    <scope>SUBCELLULAR LOCATION</scope>
    <scope>INTERACTION WITH GJA1</scope>
    <scope>TISSUE SPECIFICITY</scope>
</reference>
<reference key="5">
    <citation type="journal article" date="2011" name="FEBS Lett.">
        <title>Novel effects of CCN3 that may direct the differentiation of chondrocytes.</title>
        <authorList>
            <person name="Janune D."/>
            <person name="Kubota S."/>
            <person name="Nishida T."/>
            <person name="Kawaki H."/>
            <person name="Perbal B."/>
            <person name="Iida S."/>
            <person name="Takigawa M."/>
        </authorList>
    </citation>
    <scope>FUNCTION</scope>
    <scope>TISSUE SPECIFICITY</scope>
</reference>
<reference key="6">
    <citation type="journal article" date="2012" name="J. Neuroinflamm.">
        <title>NOV/CCN3 attenuates inflammatory pain through regulation of matrix metalloproteinases-2 and -9.</title>
        <authorList>
            <person name="Kular L."/>
            <person name="Rivat C."/>
            <person name="Lelongt B."/>
            <person name="Calmel C."/>
            <person name="Laurent M."/>
            <person name="Pohl M."/>
            <person name="Kitabgi P."/>
            <person name="Melik-Parsadaniantz S."/>
            <person name="Martinerie C."/>
        </authorList>
    </citation>
    <scope>FUNCTION</scope>
    <scope>SUBCELLULAR LOCATION</scope>
    <scope>TISSUE SPECIFICITY</scope>
    <scope>INDUCTION BY INFLAMMATORY PAIN</scope>
</reference>
<protein>
    <recommendedName>
        <fullName evidence="14">CCN family member 3</fullName>
    </recommendedName>
    <alternativeName>
        <fullName evidence="2">Cellular communication network factor 3</fullName>
    </alternativeName>
    <alternativeName>
        <fullName>Nephroblastoma-overexpressed gene protein homolog</fullName>
    </alternativeName>
    <alternativeName>
        <fullName>Protein NOV homolog</fullName>
        <shortName>NovH</shortName>
    </alternativeName>
</protein>
<comment type="function">
    <text evidence="2 3 12 13">Immediate-early protein playing a role in various cellular processes including proliferation, adhesion, migration, differentiation and survival. Acts by binding to integrins or membrane receptors such as NOTCH1. Essential regulator of hematopoietic stem and progenitor cell function. Inhibits myogenic differentiation through the activation of Notch-signaling pathway. Inhibits vascular smooth muscle cells proliferation by increasing expression of cell-cycle regulators such as CDKN2B or CDKN1A independently of TGFB1 signaling. Ligand of integrins ITGAV:ITGB3 and ITGA5:ITGB1, acts directly upon endothelial cells to stimulate pro-angiogenic activities and induces angiogenesis. In endothelial cells, supports cell adhesion, induces directed cell migration (chemotaxis) and promotes cell survival. Also plays a role in cutaneous wound healing acting as integrin receptor ligand. Supports skin fibroblast adhesion through ITGA5:ITGB1 and ITGA6:ITGB1 and induces fibroblast chemotaxis through ITGAV:ITGB5. Seems to enhance bFGF-induced DNA synthesis in fibroblasts (By similarity). Involved in bone regeneration as a negative regulator (By similarity). Enhances the articular chondrocytic phenotype, whereas it repressed the one representing endochondral ossification (PubMed:21871891). Impairs pancreatic beta-cell function, inhibits beta-cell proliferation and insulin secretion (By similarity). Plays a role as negative regulator of endothelial pro-inflammatory activation reducing monocyte adhesion, its anti-inflammatory effects occur secondary to the inhibition of NF-kappaB signaling pathway (By similarity). Contributes to the control and coordination of inflammatory processes in atherosclerosis (By similarity). Attenuates inflammatory pain through regulation of IL1B- and TNF-induced MMP9, MMP2 and CCL2 expression. Inhibits MMP9 expression through ITGB1 engagement (PubMed:22353423). Brain osteoanabolic hormone. During lactation, maintains the maternal skeleton and viability of offspring (By similarity).</text>
</comment>
<comment type="subunit">
    <text evidence="2 3 10 11">Interacts with FBLN1. Interacts (via CTCK domain) with NOTCH1 (via the EGF-like repeat region) (By similarity). Interacts with GJA1/CX43 (PubMed:15181016, PubMed:15213231). Interacts with ITGA5:ITGB1, ITGAV:ITGB3 and ITGAV:ITGB5 (By similarity). Interacts with ZDHHC22; the interaction may lead to CCN3 palmitoylation (By similarity).</text>
</comment>
<comment type="subcellular location">
    <subcellularLocation>
        <location evidence="11">Secreted</location>
    </subcellularLocation>
    <subcellularLocation>
        <location evidence="11 13">Cytoplasm</location>
    </subcellularLocation>
    <subcellularLocation>
        <location evidence="11">Cell junction</location>
        <location evidence="11">Gap junction</location>
    </subcellularLocation>
    <text evidence="11">Localizes at the gap junction in presence of GJA1.</text>
</comment>
<comment type="tissue specificity">
    <text evidence="9 11 12 13">Widely expressed. Highly expressed in neurons of dorsal root ganglia and dorsal horn of the spinal cord (at protein level) (PubMed:22353423). Expressed in astrocytes (at protein level) (PubMed:15213231). In cartilage, dominantly expressed in the chondrocyte territorial matrix (PubMed:21871891).</text>
</comment>
<comment type="induction">
    <text evidence="13">During persistent inflammatory pain the expression levels are down-regulated.</text>
</comment>
<comment type="PTM">
    <text evidence="3">May be palmitoylated on Cys-238, which is important for extracellular secretion.</text>
</comment>
<comment type="similarity">
    <text evidence="14">Belongs to the CCN family.</text>
</comment>
<keyword id="KW-0002">3D-structure</keyword>
<keyword id="KW-0965">Cell junction</keyword>
<keyword id="KW-0963">Cytoplasm</keyword>
<keyword id="KW-1015">Disulfide bond</keyword>
<keyword id="KW-0303">Gap junction</keyword>
<keyword id="KW-0325">Glycoprotein</keyword>
<keyword id="KW-0339">Growth factor</keyword>
<keyword id="KW-0372">Hormone</keyword>
<keyword id="KW-0449">Lipoprotein</keyword>
<keyword id="KW-0564">Palmitate</keyword>
<keyword id="KW-1185">Reference proteome</keyword>
<keyword id="KW-0964">Secreted</keyword>
<keyword id="KW-0732">Signal</keyword>
<accession>Q9QZQ5</accession>
<feature type="signal peptide" evidence="4">
    <location>
        <begin position="1"/>
        <end position="21"/>
    </location>
</feature>
<feature type="chain" id="PRO_0000014417" description="CCN family member 3">
    <location>
        <begin position="22"/>
        <end position="351"/>
    </location>
</feature>
<feature type="domain" description="IGFBP N-terminal" evidence="8">
    <location>
        <begin position="25"/>
        <end position="99"/>
    </location>
</feature>
<feature type="domain" description="VWFC" evidence="7">
    <location>
        <begin position="102"/>
        <end position="168"/>
    </location>
</feature>
<feature type="domain" description="TSP type-1" evidence="6">
    <location>
        <begin position="199"/>
        <end position="244"/>
    </location>
</feature>
<feature type="domain" description="CTCK" evidence="5">
    <location>
        <begin position="258"/>
        <end position="332"/>
    </location>
</feature>
<feature type="lipid moiety-binding region" description="S-palmitoyl cysteine" evidence="3">
    <location>
        <position position="238"/>
    </location>
</feature>
<feature type="glycosylation site" description="N-linked (GlcNAc...) asparagine" evidence="4">
    <location>
        <position position="91"/>
    </location>
</feature>
<feature type="glycosylation site" description="N-linked (GlcNAc...) asparagine" evidence="4">
    <location>
        <position position="274"/>
    </location>
</feature>
<feature type="disulfide bond" evidence="8">
    <location>
        <begin position="29"/>
        <end position="55"/>
    </location>
</feature>
<feature type="disulfide bond" evidence="8">
    <location>
        <begin position="33"/>
        <end position="57"/>
    </location>
</feature>
<feature type="disulfide bond" evidence="8">
    <location>
        <begin position="37"/>
        <end position="58"/>
    </location>
</feature>
<feature type="disulfide bond" evidence="8">
    <location>
        <begin position="44"/>
        <end position="61"/>
    </location>
</feature>
<feature type="disulfide bond" evidence="8">
    <location>
        <begin position="69"/>
        <end position="83"/>
    </location>
</feature>
<feature type="disulfide bond" evidence="8">
    <location>
        <begin position="75"/>
        <end position="96"/>
    </location>
</feature>
<feature type="disulfide bond" evidence="1">
    <location>
        <begin position="258"/>
        <end position="295"/>
    </location>
</feature>
<feature type="disulfide bond" evidence="1">
    <location>
        <begin position="275"/>
        <end position="309"/>
    </location>
</feature>
<feature type="disulfide bond" evidence="1">
    <location>
        <begin position="286"/>
        <end position="325"/>
    </location>
</feature>
<feature type="disulfide bond" evidence="1">
    <location>
        <begin position="289"/>
        <end position="327"/>
    </location>
</feature>
<feature type="disulfide bond" evidence="1">
    <location>
        <begin position="294"/>
        <end position="331"/>
    </location>
</feature>
<feature type="strand" evidence="16">
    <location>
        <begin position="104"/>
        <end position="106"/>
    </location>
</feature>
<feature type="strand" evidence="16">
    <location>
        <begin position="109"/>
        <end position="111"/>
    </location>
</feature>
<feature type="strand" evidence="16">
    <location>
        <begin position="123"/>
        <end position="128"/>
    </location>
</feature>
<feature type="strand" evidence="16">
    <location>
        <begin position="131"/>
        <end position="138"/>
    </location>
</feature>
<feature type="strand" evidence="16">
    <location>
        <begin position="149"/>
        <end position="155"/>
    </location>
</feature>
<feature type="strand" evidence="16">
    <location>
        <begin position="164"/>
        <end position="167"/>
    </location>
</feature>
<feature type="strand" evidence="17">
    <location>
        <begin position="213"/>
        <end position="223"/>
    </location>
</feature>
<feature type="strand" evidence="17">
    <location>
        <begin position="232"/>
        <end position="241"/>
    </location>
</feature>